<gene>
    <name evidence="1" type="primary">NA</name>
</gene>
<evidence type="ECO:0000255" key="1">
    <source>
        <dbReference type="HAMAP-Rule" id="MF_04071"/>
    </source>
</evidence>
<comment type="function">
    <text evidence="1">Catalyzes the removal of terminal sialic acid residues from viral and cellular glycoconjugates. Cleaves off the terminal sialic acids on the glycosylated HA during virus budding to facilitate virus release. Additionally helps virus spread through the circulation by further removing sialic acids from the cell surface. These cleavages prevent self-aggregation and ensure the efficient spread of the progeny virus from cell to cell. Otherwise, infection would be limited to one round of replication. Described as a receptor-destroying enzyme because it cleaves a terminal sialic acid from the cellular receptors. May facilitate viral invasion of the upper airways by cleaving the sialic acid moieties on the mucin of the airway epithelial cells. Likely to plays a role in the budding process through its association with lipid rafts during intracellular transport. May additionally display a raft-association independent effect on budding. Plays a role in the determination of host range restriction on replication and virulence. Sialidase activity in late endosome/lysosome traffic seems to enhance virus replication.</text>
</comment>
<comment type="catalytic activity">
    <reaction evidence="1">
        <text>Hydrolysis of alpha-(2-&gt;3)-, alpha-(2-&gt;6)-, alpha-(2-&gt;8)- glycosidic linkages of terminal sialic acid residues in oligosaccharides, glycoproteins, glycolipids, colominic acid and synthetic substrates.</text>
        <dbReference type="EC" id="3.2.1.18"/>
    </reaction>
</comment>
<comment type="cofactor">
    <cofactor evidence="1">
        <name>Ca(2+)</name>
        <dbReference type="ChEBI" id="CHEBI:29108"/>
    </cofactor>
</comment>
<comment type="activity regulation">
    <text evidence="1">Inhibited by the neuraminidase inhibitors zanamivir (Relenza) and oseltamivir (Tamiflu). These drugs interfere with the release of progeny virus from infected cells and are effective against all influenza strains. Resistance to neuraminidase inhibitors is quite rare.</text>
</comment>
<comment type="subunit">
    <text evidence="1">Homotetramer.</text>
</comment>
<comment type="subcellular location">
    <subcellularLocation>
        <location evidence="1">Virion membrane</location>
    </subcellularLocation>
    <subcellularLocation>
        <location evidence="1">Host apical cell membrane</location>
        <topology evidence="1">Single-pass type II membrane protein</topology>
    </subcellularLocation>
    <text evidence="1">Preferentially accumulates at the apical plasma membrane in infected polarized epithelial cells, which is the virus assembly site. Uses lipid rafts for cell surface transport and apical sorting. In the virion, forms a mushroom-shaped spike on the surface of the membrane.</text>
</comment>
<comment type="domain">
    <text evidence="1">Intact N-terminus is essential for virion morphogenesis. Possesses two apical sorting signals, one in the ectodomain, which is likely to be a glycan, and the other in the transmembrane domain. The transmembrane domain also plays a role in lipid raft association.</text>
</comment>
<comment type="PTM">
    <text evidence="1">N-glycosylated.</text>
</comment>
<comment type="miscellaneous">
    <text>The influenza A genome consist of 8 RNA segments. Genetic variation of hemagglutinin and/or neuraminidase genes results in the emergence of new influenza strains. The mechanism of variation can be the result of point mutations or the result of genetic reassortment between segments of two different strains.</text>
</comment>
<comment type="similarity">
    <text evidence="1">Belongs to the glycosyl hydrolase 34 family.</text>
</comment>
<dbReference type="EC" id="3.2.1.18" evidence="1"/>
<dbReference type="EMBL" id="L06585">
    <property type="protein sequence ID" value="AAA43368.1"/>
    <property type="molecule type" value="Genomic_RNA"/>
</dbReference>
<dbReference type="SMR" id="Q07577"/>
<dbReference type="CAZy" id="GH34">
    <property type="family name" value="Glycoside Hydrolase Family 34"/>
</dbReference>
<dbReference type="GlyCosmos" id="Q07577">
    <property type="glycosylation" value="6 sites, No reported glycans"/>
</dbReference>
<dbReference type="GO" id="GO:0020002">
    <property type="term" value="C:host cell plasma membrane"/>
    <property type="evidence" value="ECO:0007669"/>
    <property type="project" value="UniProtKB-SubCell"/>
</dbReference>
<dbReference type="GO" id="GO:0016020">
    <property type="term" value="C:membrane"/>
    <property type="evidence" value="ECO:0007669"/>
    <property type="project" value="UniProtKB-UniRule"/>
</dbReference>
<dbReference type="GO" id="GO:0055036">
    <property type="term" value="C:virion membrane"/>
    <property type="evidence" value="ECO:0007669"/>
    <property type="project" value="UniProtKB-SubCell"/>
</dbReference>
<dbReference type="GO" id="GO:0004308">
    <property type="term" value="F:exo-alpha-sialidase activity"/>
    <property type="evidence" value="ECO:0007669"/>
    <property type="project" value="UniProtKB-UniRule"/>
</dbReference>
<dbReference type="GO" id="GO:0046872">
    <property type="term" value="F:metal ion binding"/>
    <property type="evidence" value="ECO:0007669"/>
    <property type="project" value="UniProtKB-UniRule"/>
</dbReference>
<dbReference type="GO" id="GO:0005975">
    <property type="term" value="P:carbohydrate metabolic process"/>
    <property type="evidence" value="ECO:0007669"/>
    <property type="project" value="InterPro"/>
</dbReference>
<dbReference type="GO" id="GO:0046761">
    <property type="term" value="P:viral budding from plasma membrane"/>
    <property type="evidence" value="ECO:0007669"/>
    <property type="project" value="UniProtKB-UniRule"/>
</dbReference>
<dbReference type="Gene3D" id="2.120.10.10">
    <property type="match status" value="1"/>
</dbReference>
<dbReference type="HAMAP" id="MF_04071">
    <property type="entry name" value="INFV_NRAM"/>
    <property type="match status" value="1"/>
</dbReference>
<dbReference type="InterPro" id="IPR001860">
    <property type="entry name" value="Glyco_hydro_34"/>
</dbReference>
<dbReference type="InterPro" id="IPR036278">
    <property type="entry name" value="Sialidase_sf"/>
</dbReference>
<dbReference type="Pfam" id="PF00064">
    <property type="entry name" value="Neur"/>
    <property type="match status" value="1"/>
</dbReference>
<dbReference type="SUPFAM" id="SSF50939">
    <property type="entry name" value="Sialidases"/>
    <property type="match status" value="1"/>
</dbReference>
<keyword id="KW-0106">Calcium</keyword>
<keyword id="KW-1015">Disulfide bond</keyword>
<keyword id="KW-0325">Glycoprotein</keyword>
<keyword id="KW-0326">Glycosidase</keyword>
<keyword id="KW-1032">Host cell membrane</keyword>
<keyword id="KW-1043">Host membrane</keyword>
<keyword id="KW-0378">Hydrolase</keyword>
<keyword id="KW-0472">Membrane</keyword>
<keyword id="KW-0479">Metal-binding</keyword>
<keyword id="KW-0735">Signal-anchor</keyword>
<keyword id="KW-0812">Transmembrane</keyword>
<keyword id="KW-1133">Transmembrane helix</keyword>
<keyword id="KW-0946">Virion</keyword>
<proteinExistence type="inferred from homology"/>
<protein>
    <recommendedName>
        <fullName evidence="1">Neuraminidase</fullName>
        <ecNumber evidence="1">3.2.1.18</ecNumber>
    </recommendedName>
</protein>
<organismHost>
    <name type="scientific">Aves</name>
    <dbReference type="NCBI Taxonomy" id="8782"/>
</organismHost>
<reference key="1">
    <citation type="journal article" date="1993" name="Virology">
        <title>Phylogenetic analysis of the N8 neuraminidase gene of influenza A viruses.</title>
        <authorList>
            <person name="Saito T."/>
            <person name="Kawaoka Y."/>
            <person name="Webster R.G."/>
        </authorList>
    </citation>
    <scope>NUCLEOTIDE SEQUENCE [GENOMIC RNA]</scope>
</reference>
<reference key="2">
    <citation type="journal article" date="2004" name="Virus Res.">
        <title>Assembly and budding of influenza virus.</title>
        <authorList>
            <person name="Nayak D.P."/>
            <person name="Hui E.K."/>
            <person name="Barman S."/>
        </authorList>
    </citation>
    <scope>REVIEW</scope>
</reference>
<reference key="3">
    <citation type="journal article" date="2005" name="N. Engl. J. Med.">
        <title>Neuraminidase inhibitors for influenza.</title>
        <authorList>
            <person name="Moscona A."/>
        </authorList>
    </citation>
    <scope>REVIEW</scope>
</reference>
<reference key="4">
    <citation type="journal article" date="2005" name="Biol. Pharm. Bull.">
        <title>Sialobiology of influenza: molecular mechanism of host range variation of influenza viruses.</title>
        <authorList>
            <person name="Suzuki Y."/>
        </authorList>
    </citation>
    <scope>REVIEW</scope>
</reference>
<sequence>MNPNQKIITIGSVSLGLVVLNILLHIVSITITVLVLPGNGNNPSCNETVIREYNETVRIERVTQWHNTNVIEYLERPESDHFMNNTESLCDAKGFAPFSKDNGIRIGSRGHVFVIREPFVSCSPTECRTFFLTQGSLLNDKHSNGTVKDRSPYRTLMSVQIGQSPNVYQARFEAVAWSATACHDGKKWMTIGVTGPDAKAVAVVHYGGIPTDVINSWAGDILRTQESSCTCIQGECYWVMTDGPANRQAQYRAFKAKQGKIIGQTEISFNGGHIEECSCYPNEGKVECVCRDNWTGTNRPVLVISPDLSYRVGYLCAGLPSDTPRGEDSQFTGSCTSPMGNQGYGVKGFGFRQGNDVWMGRTISRTSRSGFEILKVRNGWVQNSKEQIKRQVVVDNLNWSGYSGSFTLPVELTKRNCLVPCFWVEMIRGKPEEKTIWTSSSSIVMCGVDHEIADWSWHDGAILPFDIDKM</sequence>
<name>NRAM_I88A4</name>
<accession>Q07577</accession>
<feature type="chain" id="PRO_0000078695" description="Neuraminidase">
    <location>
        <begin position="1"/>
        <end position="470"/>
    </location>
</feature>
<feature type="topological domain" description="Intravirion" evidence="1">
    <location>
        <begin position="1"/>
        <end position="14"/>
    </location>
</feature>
<feature type="transmembrane region" description="Helical" evidence="1">
    <location>
        <begin position="15"/>
        <end position="35"/>
    </location>
</feature>
<feature type="topological domain" description="Virion surface" evidence="1">
    <location>
        <begin position="36"/>
        <end position="470"/>
    </location>
</feature>
<feature type="region of interest" description="Involved in apical transport and lipid raft association" evidence="1">
    <location>
        <begin position="11"/>
        <end position="32"/>
    </location>
</feature>
<feature type="region of interest" description="Hypervariable stalk region" evidence="1">
    <location>
        <begin position="32"/>
        <end position="86"/>
    </location>
</feature>
<feature type="region of interest" description="Head of neuraminidase" evidence="1">
    <location>
        <begin position="89"/>
        <end position="470"/>
    </location>
</feature>
<feature type="active site" description="Proton donor/acceptor" evidence="1">
    <location>
        <position position="149"/>
    </location>
</feature>
<feature type="active site" description="Nucleophile" evidence="1">
    <location>
        <position position="402"/>
    </location>
</feature>
<feature type="binding site" evidence="1">
    <location>
        <position position="116"/>
    </location>
    <ligand>
        <name>substrate</name>
    </ligand>
</feature>
<feature type="binding site" evidence="1">
    <location>
        <position position="150"/>
    </location>
    <ligand>
        <name>substrate</name>
    </ligand>
</feature>
<feature type="binding site" evidence="1">
    <location>
        <begin position="275"/>
        <end position="276"/>
    </location>
    <ligand>
        <name>substrate</name>
    </ligand>
</feature>
<feature type="binding site" evidence="1">
    <location>
        <position position="291"/>
    </location>
    <ligand>
        <name>substrate</name>
    </ligand>
</feature>
<feature type="binding site" evidence="1">
    <location>
        <position position="292"/>
    </location>
    <ligand>
        <name>Ca(2+)</name>
        <dbReference type="ChEBI" id="CHEBI:29108"/>
    </ligand>
</feature>
<feature type="binding site" evidence="1">
    <location>
        <position position="296"/>
    </location>
    <ligand>
        <name>Ca(2+)</name>
        <dbReference type="ChEBI" id="CHEBI:29108"/>
    </ligand>
</feature>
<feature type="binding site" evidence="1">
    <location>
        <position position="322"/>
    </location>
    <ligand>
        <name>Ca(2+)</name>
        <dbReference type="ChEBI" id="CHEBI:29108"/>
    </ligand>
</feature>
<feature type="binding site" evidence="1">
    <location>
        <position position="368"/>
    </location>
    <ligand>
        <name>substrate</name>
    </ligand>
</feature>
<feature type="glycosylation site" description="N-linked (GlcNAc...) asparagine; by host" evidence="1">
    <location>
        <position position="46"/>
    </location>
</feature>
<feature type="glycosylation site" description="N-linked (GlcNAc...) asparagine; by host" evidence="1">
    <location>
        <position position="54"/>
    </location>
</feature>
<feature type="glycosylation site" description="N-linked (GlcNAc...) asparagine; by host" evidence="1">
    <location>
        <position position="84"/>
    </location>
</feature>
<feature type="glycosylation site" description="N-linked (GlcNAc...) asparagine; by host" evidence="1">
    <location>
        <position position="144"/>
    </location>
</feature>
<feature type="glycosylation site" description="N-linked (GlcNAc...) asparagine; by host" evidence="1">
    <location>
        <position position="293"/>
    </location>
</feature>
<feature type="glycosylation site" description="N-linked (GlcNAc...) asparagine; by host" evidence="1">
    <location>
        <position position="398"/>
    </location>
</feature>
<feature type="disulfide bond" evidence="1">
    <location>
        <begin position="90"/>
        <end position="417"/>
    </location>
</feature>
<feature type="disulfide bond" evidence="1">
    <location>
        <begin position="122"/>
        <end position="127"/>
    </location>
</feature>
<feature type="disulfide bond" evidence="1">
    <location>
        <begin position="182"/>
        <end position="229"/>
    </location>
</feature>
<feature type="disulfide bond" evidence="1">
    <location>
        <begin position="231"/>
        <end position="236"/>
    </location>
</feature>
<feature type="disulfide bond" evidence="1">
    <location>
        <begin position="277"/>
        <end position="290"/>
    </location>
</feature>
<feature type="disulfide bond" evidence="1">
    <location>
        <begin position="279"/>
        <end position="288"/>
    </location>
</feature>
<feature type="disulfide bond" evidence="1">
    <location>
        <begin position="316"/>
        <end position="335"/>
    </location>
</feature>
<feature type="disulfide bond" evidence="1">
    <location>
        <begin position="421"/>
        <end position="446"/>
    </location>
</feature>
<organism>
    <name type="scientific">Influenza A virus (strain A/Herring gull/DE/677/1988 H2N8)</name>
    <dbReference type="NCBI Taxonomy" id="387243"/>
    <lineage>
        <taxon>Viruses</taxon>
        <taxon>Riboviria</taxon>
        <taxon>Orthornavirae</taxon>
        <taxon>Negarnaviricota</taxon>
        <taxon>Polyploviricotina</taxon>
        <taxon>Insthoviricetes</taxon>
        <taxon>Articulavirales</taxon>
        <taxon>Orthomyxoviridae</taxon>
        <taxon>Alphainfluenzavirus</taxon>
        <taxon>Alphainfluenzavirus influenzae</taxon>
        <taxon>Influenza A virus</taxon>
    </lineage>
</organism>